<proteinExistence type="inferred from homology"/>
<dbReference type="EC" id="4.1.99.12" evidence="1"/>
<dbReference type="EMBL" id="CP000057">
    <property type="protein sequence ID" value="AAX87812.1"/>
    <property type="molecule type" value="Genomic_DNA"/>
</dbReference>
<dbReference type="RefSeq" id="WP_011272212.1">
    <property type="nucleotide sequence ID" value="NC_007146.2"/>
</dbReference>
<dbReference type="SMR" id="Q4QMD5"/>
<dbReference type="KEGG" id="hit:NTHI0925"/>
<dbReference type="HOGENOM" id="CLU_020273_3_0_6"/>
<dbReference type="UniPathway" id="UPA00275">
    <property type="reaction ID" value="UER00399"/>
</dbReference>
<dbReference type="Proteomes" id="UP000002525">
    <property type="component" value="Chromosome"/>
</dbReference>
<dbReference type="GO" id="GO:0005829">
    <property type="term" value="C:cytosol"/>
    <property type="evidence" value="ECO:0007669"/>
    <property type="project" value="TreeGrafter"/>
</dbReference>
<dbReference type="GO" id="GO:0008686">
    <property type="term" value="F:3,4-dihydroxy-2-butanone-4-phosphate synthase activity"/>
    <property type="evidence" value="ECO:0007669"/>
    <property type="project" value="UniProtKB-UniRule"/>
</dbReference>
<dbReference type="GO" id="GO:0000287">
    <property type="term" value="F:magnesium ion binding"/>
    <property type="evidence" value="ECO:0007669"/>
    <property type="project" value="UniProtKB-UniRule"/>
</dbReference>
<dbReference type="GO" id="GO:0030145">
    <property type="term" value="F:manganese ion binding"/>
    <property type="evidence" value="ECO:0007669"/>
    <property type="project" value="UniProtKB-UniRule"/>
</dbReference>
<dbReference type="GO" id="GO:0009231">
    <property type="term" value="P:riboflavin biosynthetic process"/>
    <property type="evidence" value="ECO:0007669"/>
    <property type="project" value="UniProtKB-UniRule"/>
</dbReference>
<dbReference type="FunFam" id="3.90.870.10:FF:000002">
    <property type="entry name" value="3,4-dihydroxy-2-butanone 4-phosphate synthase"/>
    <property type="match status" value="1"/>
</dbReference>
<dbReference type="Gene3D" id="3.90.870.10">
    <property type="entry name" value="DHBP synthase"/>
    <property type="match status" value="1"/>
</dbReference>
<dbReference type="HAMAP" id="MF_00180">
    <property type="entry name" value="RibB"/>
    <property type="match status" value="1"/>
</dbReference>
<dbReference type="InterPro" id="IPR017945">
    <property type="entry name" value="DHBP_synth_RibB-like_a/b_dom"/>
</dbReference>
<dbReference type="InterPro" id="IPR000422">
    <property type="entry name" value="DHBP_synthase_RibB"/>
</dbReference>
<dbReference type="NCBIfam" id="TIGR00506">
    <property type="entry name" value="ribB"/>
    <property type="match status" value="1"/>
</dbReference>
<dbReference type="PANTHER" id="PTHR21327:SF38">
    <property type="entry name" value="3,4-DIHYDROXY-2-BUTANONE 4-PHOSPHATE SYNTHASE"/>
    <property type="match status" value="1"/>
</dbReference>
<dbReference type="PANTHER" id="PTHR21327">
    <property type="entry name" value="GTP CYCLOHYDROLASE II-RELATED"/>
    <property type="match status" value="1"/>
</dbReference>
<dbReference type="Pfam" id="PF00926">
    <property type="entry name" value="DHBP_synthase"/>
    <property type="match status" value="1"/>
</dbReference>
<dbReference type="SUPFAM" id="SSF55821">
    <property type="entry name" value="YrdC/RibB"/>
    <property type="match status" value="1"/>
</dbReference>
<feature type="chain" id="PRO_1000040610" description="3,4-dihydroxy-2-butanone 4-phosphate synthase">
    <location>
        <begin position="1"/>
        <end position="215"/>
    </location>
</feature>
<feature type="binding site" evidence="1">
    <location>
        <begin position="38"/>
        <end position="39"/>
    </location>
    <ligand>
        <name>D-ribulose 5-phosphate</name>
        <dbReference type="ChEBI" id="CHEBI:58121"/>
    </ligand>
</feature>
<feature type="binding site" evidence="1">
    <location>
        <position position="39"/>
    </location>
    <ligand>
        <name>Mg(2+)</name>
        <dbReference type="ChEBI" id="CHEBI:18420"/>
        <label>1</label>
    </ligand>
</feature>
<feature type="binding site" evidence="1">
    <location>
        <position position="39"/>
    </location>
    <ligand>
        <name>Mg(2+)</name>
        <dbReference type="ChEBI" id="CHEBI:18420"/>
        <label>2</label>
    </ligand>
</feature>
<feature type="binding site" evidence="1">
    <location>
        <position position="43"/>
    </location>
    <ligand>
        <name>D-ribulose 5-phosphate</name>
        <dbReference type="ChEBI" id="CHEBI:58121"/>
    </ligand>
</feature>
<feature type="binding site" evidence="1">
    <location>
        <begin position="151"/>
        <end position="155"/>
    </location>
    <ligand>
        <name>D-ribulose 5-phosphate</name>
        <dbReference type="ChEBI" id="CHEBI:58121"/>
    </ligand>
</feature>
<feature type="binding site" evidence="1">
    <location>
        <position position="154"/>
    </location>
    <ligand>
        <name>Mg(2+)</name>
        <dbReference type="ChEBI" id="CHEBI:18420"/>
        <label>2</label>
    </ligand>
</feature>
<feature type="binding site" evidence="1">
    <location>
        <position position="175"/>
    </location>
    <ligand>
        <name>D-ribulose 5-phosphate</name>
        <dbReference type="ChEBI" id="CHEBI:58121"/>
    </ligand>
</feature>
<feature type="site" description="Essential for catalytic activity" evidence="1">
    <location>
        <position position="137"/>
    </location>
</feature>
<feature type="site" description="Essential for catalytic activity" evidence="1">
    <location>
        <position position="175"/>
    </location>
</feature>
<protein>
    <recommendedName>
        <fullName evidence="1">3,4-dihydroxy-2-butanone 4-phosphate synthase</fullName>
        <shortName evidence="1">DHBP synthase</shortName>
        <ecNumber evidence="1">4.1.99.12</ecNumber>
    </recommendedName>
</protein>
<comment type="function">
    <text evidence="1">Catalyzes the conversion of D-ribulose 5-phosphate to formate and 3,4-dihydroxy-2-butanone 4-phosphate.</text>
</comment>
<comment type="catalytic activity">
    <reaction evidence="1">
        <text>D-ribulose 5-phosphate = (2S)-2-hydroxy-3-oxobutyl phosphate + formate + H(+)</text>
        <dbReference type="Rhea" id="RHEA:18457"/>
        <dbReference type="ChEBI" id="CHEBI:15378"/>
        <dbReference type="ChEBI" id="CHEBI:15740"/>
        <dbReference type="ChEBI" id="CHEBI:58121"/>
        <dbReference type="ChEBI" id="CHEBI:58830"/>
        <dbReference type="EC" id="4.1.99.12"/>
    </reaction>
</comment>
<comment type="cofactor">
    <cofactor evidence="1">
        <name>Mg(2+)</name>
        <dbReference type="ChEBI" id="CHEBI:18420"/>
    </cofactor>
    <cofactor evidence="1">
        <name>Mn(2+)</name>
        <dbReference type="ChEBI" id="CHEBI:29035"/>
    </cofactor>
    <text evidence="1">Binds 2 divalent metal cations per subunit. Magnesium or manganese.</text>
</comment>
<comment type="pathway">
    <text evidence="1">Cofactor biosynthesis; riboflavin biosynthesis; 2-hydroxy-3-oxobutyl phosphate from D-ribulose 5-phosphate: step 1/1.</text>
</comment>
<comment type="subunit">
    <text evidence="1">Homodimer.</text>
</comment>
<comment type="similarity">
    <text evidence="1">Belongs to the DHBP synthase family.</text>
</comment>
<keyword id="KW-0456">Lyase</keyword>
<keyword id="KW-0460">Magnesium</keyword>
<keyword id="KW-0464">Manganese</keyword>
<keyword id="KW-0479">Metal-binding</keyword>
<keyword id="KW-0686">Riboflavin biosynthesis</keyword>
<organism>
    <name type="scientific">Haemophilus influenzae (strain 86-028NP)</name>
    <dbReference type="NCBI Taxonomy" id="281310"/>
    <lineage>
        <taxon>Bacteria</taxon>
        <taxon>Pseudomonadati</taxon>
        <taxon>Pseudomonadota</taxon>
        <taxon>Gammaproteobacteria</taxon>
        <taxon>Pasteurellales</taxon>
        <taxon>Pasteurellaceae</taxon>
        <taxon>Haemophilus</taxon>
    </lineage>
</organism>
<accession>Q4QMD5</accession>
<reference key="1">
    <citation type="journal article" date="2005" name="J. Bacteriol.">
        <title>Genomic sequence of an otitis media isolate of nontypeable Haemophilus influenzae: comparative study with H. influenzae serotype d, strain KW20.</title>
        <authorList>
            <person name="Harrison A."/>
            <person name="Dyer D.W."/>
            <person name="Gillaspy A."/>
            <person name="Ray W.C."/>
            <person name="Mungur R."/>
            <person name="Carson M.B."/>
            <person name="Zhong H."/>
            <person name="Gipson J."/>
            <person name="Gipson M."/>
            <person name="Johnson L.S."/>
            <person name="Lewis L."/>
            <person name="Bakaletz L.O."/>
            <person name="Munson R.S. Jr."/>
        </authorList>
    </citation>
    <scope>NUCLEOTIDE SEQUENCE [LARGE SCALE GENOMIC DNA]</scope>
    <source>
        <strain>86-028NP</strain>
    </source>
</reference>
<evidence type="ECO:0000255" key="1">
    <source>
        <dbReference type="HAMAP-Rule" id="MF_00180"/>
    </source>
</evidence>
<gene>
    <name evidence="1" type="primary">ribB</name>
    <name type="ordered locus">NTHI0925</name>
</gene>
<name>RIBB_HAEI8</name>
<sequence>MNQSILSPFGNTAEERVLNAINAFKHGTGVLVLDDEDRENEGDLIFPAETITSEQMAKLIRYGSGIVCLCITDERCQQLDLPPMVEHNNSVNKTAFTVTIEAAKGVSTGVSAADRVTTIQTAIADNAVPTDLHRPGHVFPLRAANGGVLTRRGHTEASVDLARLAGFKEAGVICEITNDDGTMARTPEIVEFAKKFGYSVLTIEDLVEYRLAHNI</sequence>